<comment type="function">
    <text evidence="1 5">Short chain dehydrogenase; part of the gene cluster that mediates the biosynthesis of andrastins, meroterpenoid compounds that exhibit inhibitory activity against ras farnesyltransferase, suggesting that they could be promising leads for antitumor agents (PubMed:28529508). The first step of the pathway is the synthesis of 3,5-dimethylorsellinic acid (DMOA) by the polyketide synthase adrD via condensation of one acetyl-CoA starter unit with 3 malonyl-CoA units and 2 methylations (By similarity). DMAO is then converted to farnesyl-DMAO by the prenyltransferase adrG (By similarity). The methyltransferase adrK catalyzes the methylation of the carboxyl group of farnesyl-DMAO to farnesyl-DMAO methyl ester which is further converted to epoxyfarnesyl-DMAO methyl ester by the FAD-dependent monooxygenase adrH (By similarity). The terpene cyclase adrI then catalyzes the carbon skeletal rearrangement to generate the andrastin E, the first compound in the pathway having the andrastin scaffold, with the tetracyclic ring system (By similarity). The post-cyclization tailoring enzymes adrF, adrE, adrJ, and adrA, are involved in the conversion of andrastin E into andrastin A. The short chain dehydrogenase adrF is responsible for the oxidation of the C-3 a hydroxyl group of andrastin E to yield the corresponding ketone, andrastin D. The ketoreductase adrE stereoselectively reduces the carbonyl moiety to reverse the stereochemistry of the C-3 position to yield andrastin F. The acetyltransferase adrJ is the acetyltransferase that attaches the acetyl group to the C-3 hydroxyl group of andrastin F to yield andrastin C. Finally, the cytochrome P450 monooxygenase adrA catalyzes two sequential oxidation reactions of the C-23 methyl group, to generate the corresponding alcohol andrastin B, and aldehyde andrastin A (By similarity).</text>
</comment>
<comment type="pathway">
    <text evidence="5">Secondary metabolite biosynthesis; terpenoid biosynthesis.</text>
</comment>
<comment type="disruption phenotype">
    <text evidence="5">Drastically reduces the production of andrastin A.</text>
</comment>
<comment type="similarity">
    <text evidence="7">Belongs to the short-chain dehydrogenases/reductases (SDR) family.</text>
</comment>
<keyword id="KW-0521">NADP</keyword>
<keyword id="KW-0560">Oxidoreductase</keyword>
<sequence length="256" mass="27022">MSLLQDIVVIITGSASGIGLATATAALSQGARILGVDVSSAPVSLNEHPNYKFMQGDLTHETTPRQVVETCIKEFGGRIDGLLNIAGIMDQNSSVDSLSDYMWERCIAVNLTAPVKLMREVIPIMRQQQSGSIVNVGSKAATSGASSGVAYTASKHGLMGATKNVAWRYKQEGIRCNAVCPGGVPTGIVQASDPSTWDKDALGTMSLIHQAHAADRQKGLGVEAEDIADCLLFLISSQSKRINGAIIPIDNAWSVI</sequence>
<evidence type="ECO:0000250" key="1">
    <source>
        <dbReference type="UniProtKB" id="B6HV34"/>
    </source>
</evidence>
<evidence type="ECO:0000250" key="2">
    <source>
        <dbReference type="UniProtKB" id="L0E2Z4"/>
    </source>
</evidence>
<evidence type="ECO:0000250" key="3">
    <source>
        <dbReference type="UniProtKB" id="O93868"/>
    </source>
</evidence>
<evidence type="ECO:0000255" key="4">
    <source>
        <dbReference type="PROSITE-ProRule" id="PRU10001"/>
    </source>
</evidence>
<evidence type="ECO:0000269" key="5">
    <source>
    </source>
</evidence>
<evidence type="ECO:0000303" key="6">
    <source>
    </source>
</evidence>
<evidence type="ECO:0000305" key="7"/>
<evidence type="ECO:0000305" key="8">
    <source>
    </source>
</evidence>
<feature type="chain" id="PRO_0000446482" description="Short chain dehydrogenase adrF">
    <location>
        <begin position="1"/>
        <end position="256"/>
    </location>
</feature>
<feature type="active site" description="Proton acceptor" evidence="4">
    <location>
        <position position="151"/>
    </location>
</feature>
<feature type="active site" description="Lowers pKa of active site Tyr" evidence="3">
    <location>
        <position position="155"/>
    </location>
</feature>
<feature type="binding site" evidence="2">
    <location>
        <position position="11"/>
    </location>
    <ligand>
        <name>NADP(+)</name>
        <dbReference type="ChEBI" id="CHEBI:58349"/>
    </ligand>
</feature>
<feature type="binding site" evidence="2">
    <location>
        <position position="57"/>
    </location>
    <ligand>
        <name>NADP(+)</name>
        <dbReference type="ChEBI" id="CHEBI:58349"/>
    </ligand>
</feature>
<feature type="binding site" evidence="2">
    <location>
        <position position="119"/>
    </location>
    <ligand>
        <name>NADP(+)</name>
        <dbReference type="ChEBI" id="CHEBI:58349"/>
    </ligand>
</feature>
<feature type="binding site" evidence="3">
    <location>
        <position position="151"/>
    </location>
    <ligand>
        <name>NADP(+)</name>
        <dbReference type="ChEBI" id="CHEBI:58349"/>
    </ligand>
</feature>
<feature type="binding site" evidence="3">
    <location>
        <position position="155"/>
    </location>
    <ligand>
        <name>NADP(+)</name>
        <dbReference type="ChEBI" id="CHEBI:58349"/>
    </ligand>
</feature>
<feature type="binding site" evidence="3">
    <location>
        <position position="184"/>
    </location>
    <ligand>
        <name>NADP(+)</name>
        <dbReference type="ChEBI" id="CHEBI:58349"/>
    </ligand>
</feature>
<accession>A0A1Y0BRF8</accession>
<name>ADRF_PENRO</name>
<dbReference type="EC" id="1.1.1.-" evidence="8"/>
<dbReference type="EMBL" id="KY349137">
    <property type="protein sequence ID" value="ART41211.1"/>
    <property type="molecule type" value="Genomic_DNA"/>
</dbReference>
<dbReference type="SMR" id="A0A1Y0BRF8"/>
<dbReference type="OMA" id="IPIDNAW"/>
<dbReference type="UniPathway" id="UPA00213"/>
<dbReference type="GO" id="GO:0016491">
    <property type="term" value="F:oxidoreductase activity"/>
    <property type="evidence" value="ECO:0007669"/>
    <property type="project" value="UniProtKB-KW"/>
</dbReference>
<dbReference type="GO" id="GO:0016114">
    <property type="term" value="P:terpenoid biosynthetic process"/>
    <property type="evidence" value="ECO:0007669"/>
    <property type="project" value="UniProtKB-UniPathway"/>
</dbReference>
<dbReference type="CDD" id="cd05233">
    <property type="entry name" value="SDR_c"/>
    <property type="match status" value="1"/>
</dbReference>
<dbReference type="FunFam" id="3.40.50.720:FF:000084">
    <property type="entry name" value="Short-chain dehydrogenase reductase"/>
    <property type="match status" value="1"/>
</dbReference>
<dbReference type="Gene3D" id="3.40.50.720">
    <property type="entry name" value="NAD(P)-binding Rossmann-like Domain"/>
    <property type="match status" value="1"/>
</dbReference>
<dbReference type="InterPro" id="IPR036291">
    <property type="entry name" value="NAD(P)-bd_dom_sf"/>
</dbReference>
<dbReference type="InterPro" id="IPR002347">
    <property type="entry name" value="SDR_fam"/>
</dbReference>
<dbReference type="InterPro" id="IPR051122">
    <property type="entry name" value="SDR_superfamily_enzyme"/>
</dbReference>
<dbReference type="PANTHER" id="PTHR43477">
    <property type="entry name" value="DIHYDROANTICAPSIN 7-DEHYDROGENASE"/>
    <property type="match status" value="1"/>
</dbReference>
<dbReference type="PANTHER" id="PTHR43477:SF1">
    <property type="entry name" value="DIHYDROANTICAPSIN 7-DEHYDROGENASE"/>
    <property type="match status" value="1"/>
</dbReference>
<dbReference type="Pfam" id="PF00106">
    <property type="entry name" value="adh_short"/>
    <property type="match status" value="1"/>
</dbReference>
<dbReference type="PRINTS" id="PR00081">
    <property type="entry name" value="GDHRDH"/>
</dbReference>
<dbReference type="PRINTS" id="PR00080">
    <property type="entry name" value="SDRFAMILY"/>
</dbReference>
<dbReference type="SUPFAM" id="SSF51735">
    <property type="entry name" value="NAD(P)-binding Rossmann-fold domains"/>
    <property type="match status" value="1"/>
</dbReference>
<proteinExistence type="inferred from homology"/>
<reference key="1">
    <citation type="journal article" date="2017" name="Front. Microbiol.">
        <title>The biosynthetic gene cluster for andrastin A in Penicillium roqueforti.</title>
        <authorList>
            <person name="Rojas-Aedo J.F."/>
            <person name="Gil-Duran C."/>
            <person name="Del-Cid A."/>
            <person name="Valdes N."/>
            <person name="Alamos P."/>
            <person name="Vaca I."/>
            <person name="Garcia-Rico R.O."/>
            <person name="Levican G."/>
            <person name="Tello M."/>
            <person name="Chavez R."/>
        </authorList>
    </citation>
    <scope>NUCLEOTIDE SEQUENCE [GENOMIC DNA]</scope>
    <scope>IDENTIFICATION</scope>
    <scope>FUNCTION</scope>
    <scope>DISRUPTION PHENOTYPE</scope>
    <source>
        <strain>CECT 2905</strain>
    </source>
</reference>
<organism>
    <name type="scientific">Penicillium roqueforti</name>
    <dbReference type="NCBI Taxonomy" id="5082"/>
    <lineage>
        <taxon>Eukaryota</taxon>
        <taxon>Fungi</taxon>
        <taxon>Dikarya</taxon>
        <taxon>Ascomycota</taxon>
        <taxon>Pezizomycotina</taxon>
        <taxon>Eurotiomycetes</taxon>
        <taxon>Eurotiomycetidae</taxon>
        <taxon>Eurotiales</taxon>
        <taxon>Aspergillaceae</taxon>
        <taxon>Penicillium</taxon>
    </lineage>
</organism>
<protein>
    <recommendedName>
        <fullName evidence="6">Short chain dehydrogenase adrF</fullName>
        <ecNumber evidence="8">1.1.1.-</ecNumber>
    </recommendedName>
    <alternativeName>
        <fullName evidence="6">Andrastin A biosynthesis cluster protein F</fullName>
    </alternativeName>
</protein>
<gene>
    <name evidence="6" type="primary">adrF</name>
</gene>